<evidence type="ECO:0000250" key="1">
    <source>
        <dbReference type="UniProtKB" id="P03891"/>
    </source>
</evidence>
<evidence type="ECO:0000250" key="2">
    <source>
        <dbReference type="UniProtKB" id="P03892"/>
    </source>
</evidence>
<evidence type="ECO:0000255" key="3"/>
<evidence type="ECO:0000305" key="4"/>
<protein>
    <recommendedName>
        <fullName evidence="1">NADH-ubiquinone oxidoreductase chain 2</fullName>
        <ecNumber evidence="1">7.1.1.2</ecNumber>
    </recommendedName>
    <alternativeName>
        <fullName>NADH dehydrogenase subunit 2</fullName>
    </alternativeName>
</protein>
<reference key="1">
    <citation type="submission" date="1993-12" db="EMBL/GenBank/DDBJ databases">
        <authorList>
            <person name="Dovc P."/>
            <person name="Mann W."/>
            <person name="Hecht W."/>
        </authorList>
    </citation>
    <scope>NUCLEOTIDE SEQUENCE [GENOMIC DNA]</scope>
    <source>
        <tissue>Liver</tissue>
    </source>
</reference>
<sequence>MNPIIFIIILMTVMLGTTIVMISSHWLRIWIGFEMNMLAIIPIMMKKHNPRATAASSDYFLTQSTASMLLMMAIIINLMFSGQWTVTKLFHPTASMLMTMALAMKLGMAPFHFWVPEVTQGIPLSSGLILLTWQKLVPMSVLYQILPSINLDLILTLSILSIMIGGWGGLNQTQLRKIMAYSSIAHMGWMTAILPYNPTMMLLNLIIYITMTSTMFLLFMANSTTTTLSLSLTWNKMPIMTTLVLITLLSMGGLPPLSGFVPKWMIIQEMTKNNSIILPTLMAITALLNLYFYMRLTYSTTLTMFPSTNNMKMKWQFSTTKRMTLLPTLTVLSTMLLPLTPILSILE</sequence>
<keyword id="KW-0249">Electron transport</keyword>
<keyword id="KW-0472">Membrane</keyword>
<keyword id="KW-0496">Mitochondrion</keyword>
<keyword id="KW-0999">Mitochondrion inner membrane</keyword>
<keyword id="KW-0520">NAD</keyword>
<keyword id="KW-1185">Reference proteome</keyword>
<keyword id="KW-0679">Respiratory chain</keyword>
<keyword id="KW-1278">Translocase</keyword>
<keyword id="KW-0812">Transmembrane</keyword>
<keyword id="KW-1133">Transmembrane helix</keyword>
<keyword id="KW-0813">Transport</keyword>
<keyword id="KW-0830">Ubiquinone</keyword>
<geneLocation type="mitochondrion"/>
<comment type="function">
    <text evidence="1">Core subunit of the mitochondrial membrane respiratory chain NADH dehydrogenase (Complex I) which catalyzes electron transfer from NADH through the respiratory chain, using ubiquinone as an electron acceptor. Essential for the catalytic activity and assembly of complex I.</text>
</comment>
<comment type="catalytic activity">
    <reaction evidence="1">
        <text>a ubiquinone + NADH + 5 H(+)(in) = a ubiquinol + NAD(+) + 4 H(+)(out)</text>
        <dbReference type="Rhea" id="RHEA:29091"/>
        <dbReference type="Rhea" id="RHEA-COMP:9565"/>
        <dbReference type="Rhea" id="RHEA-COMP:9566"/>
        <dbReference type="ChEBI" id="CHEBI:15378"/>
        <dbReference type="ChEBI" id="CHEBI:16389"/>
        <dbReference type="ChEBI" id="CHEBI:17976"/>
        <dbReference type="ChEBI" id="CHEBI:57540"/>
        <dbReference type="ChEBI" id="CHEBI:57945"/>
        <dbReference type="EC" id="7.1.1.2"/>
    </reaction>
</comment>
<comment type="subunit">
    <text evidence="1 2">Core subunit of respiratory chain NADH dehydrogenase (Complex I) which is composed of 45 different subunits. Interacts with TMEM242 (By similarity).</text>
</comment>
<comment type="subcellular location">
    <subcellularLocation>
        <location evidence="2">Mitochondrion inner membrane</location>
        <topology evidence="3">Multi-pass membrane protein</topology>
    </subcellularLocation>
</comment>
<comment type="similarity">
    <text evidence="4">Belongs to the complex I subunit 2 family.</text>
</comment>
<dbReference type="EC" id="7.1.1.2" evidence="1"/>
<dbReference type="EMBL" id="X72965">
    <property type="protein sequence ID" value="CAA51468.1"/>
    <property type="molecule type" value="Genomic_DNA"/>
</dbReference>
<dbReference type="SMR" id="Q36346"/>
<dbReference type="STRING" id="9925.ENSCHIP00000000002"/>
<dbReference type="Proteomes" id="UP000291000">
    <property type="component" value="Unassembled WGS sequence"/>
</dbReference>
<dbReference type="Proteomes" id="UP000694566">
    <property type="component" value="Unplaced"/>
</dbReference>
<dbReference type="GO" id="GO:0005743">
    <property type="term" value="C:mitochondrial inner membrane"/>
    <property type="evidence" value="ECO:0000250"/>
    <property type="project" value="UniProtKB"/>
</dbReference>
<dbReference type="GO" id="GO:0008137">
    <property type="term" value="F:NADH dehydrogenase (ubiquinone) activity"/>
    <property type="evidence" value="ECO:0000250"/>
    <property type="project" value="UniProtKB"/>
</dbReference>
<dbReference type="GO" id="GO:0006120">
    <property type="term" value="P:mitochondrial electron transport, NADH to ubiquinone"/>
    <property type="evidence" value="ECO:0000250"/>
    <property type="project" value="UniProtKB"/>
</dbReference>
<dbReference type="GO" id="GO:0032981">
    <property type="term" value="P:mitochondrial respiratory chain complex I assembly"/>
    <property type="evidence" value="ECO:0000250"/>
    <property type="project" value="UniProtKB"/>
</dbReference>
<dbReference type="InterPro" id="IPR050175">
    <property type="entry name" value="Complex_I_Subunit_2"/>
</dbReference>
<dbReference type="InterPro" id="IPR010933">
    <property type="entry name" value="NADH_DH_su2_C"/>
</dbReference>
<dbReference type="InterPro" id="IPR003917">
    <property type="entry name" value="NADH_UbQ_OxRdtase_chain2"/>
</dbReference>
<dbReference type="InterPro" id="IPR001750">
    <property type="entry name" value="ND/Mrp_TM"/>
</dbReference>
<dbReference type="PANTHER" id="PTHR46552">
    <property type="entry name" value="NADH-UBIQUINONE OXIDOREDUCTASE CHAIN 2"/>
    <property type="match status" value="1"/>
</dbReference>
<dbReference type="PANTHER" id="PTHR46552:SF1">
    <property type="entry name" value="NADH-UBIQUINONE OXIDOREDUCTASE CHAIN 2"/>
    <property type="match status" value="1"/>
</dbReference>
<dbReference type="Pfam" id="PF06444">
    <property type="entry name" value="NADH_dehy_S2_C"/>
    <property type="match status" value="1"/>
</dbReference>
<dbReference type="Pfam" id="PF00361">
    <property type="entry name" value="Proton_antipo_M"/>
    <property type="match status" value="1"/>
</dbReference>
<dbReference type="PRINTS" id="PR01436">
    <property type="entry name" value="NADHDHGNASE2"/>
</dbReference>
<accession>Q36346</accession>
<proteinExistence type="inferred from homology"/>
<feature type="chain" id="PRO_0000117566" description="NADH-ubiquinone oxidoreductase chain 2">
    <location>
        <begin position="1"/>
        <end position="347"/>
    </location>
</feature>
<feature type="transmembrane region" description="Helical" evidence="3">
    <location>
        <begin position="3"/>
        <end position="23"/>
    </location>
</feature>
<feature type="transmembrane region" description="Helical" evidence="3">
    <location>
        <begin position="25"/>
        <end position="45"/>
    </location>
</feature>
<feature type="transmembrane region" description="Helical" evidence="3">
    <location>
        <begin position="66"/>
        <end position="86"/>
    </location>
</feature>
<feature type="transmembrane region" description="Helical" evidence="3">
    <location>
        <begin position="96"/>
        <end position="116"/>
    </location>
</feature>
<feature type="transmembrane region" description="Helical" evidence="3">
    <location>
        <begin position="122"/>
        <end position="142"/>
    </location>
</feature>
<feature type="transmembrane region" description="Helical" evidence="3">
    <location>
        <begin position="145"/>
        <end position="165"/>
    </location>
</feature>
<feature type="transmembrane region" description="Helical" evidence="3">
    <location>
        <begin position="178"/>
        <end position="198"/>
    </location>
</feature>
<feature type="transmembrane region" description="Helical" evidence="3">
    <location>
        <begin position="200"/>
        <end position="220"/>
    </location>
</feature>
<feature type="transmembrane region" description="Helical" evidence="3">
    <location>
        <begin position="237"/>
        <end position="257"/>
    </location>
</feature>
<feature type="transmembrane region" description="Helical" evidence="3">
    <location>
        <begin position="274"/>
        <end position="294"/>
    </location>
</feature>
<feature type="transmembrane region" description="Helical" evidence="3">
    <location>
        <begin position="325"/>
        <end position="345"/>
    </location>
</feature>
<organism>
    <name type="scientific">Capra hircus</name>
    <name type="common">Goat</name>
    <dbReference type="NCBI Taxonomy" id="9925"/>
    <lineage>
        <taxon>Eukaryota</taxon>
        <taxon>Metazoa</taxon>
        <taxon>Chordata</taxon>
        <taxon>Craniata</taxon>
        <taxon>Vertebrata</taxon>
        <taxon>Euteleostomi</taxon>
        <taxon>Mammalia</taxon>
        <taxon>Eutheria</taxon>
        <taxon>Laurasiatheria</taxon>
        <taxon>Artiodactyla</taxon>
        <taxon>Ruminantia</taxon>
        <taxon>Pecora</taxon>
        <taxon>Bovidae</taxon>
        <taxon>Caprinae</taxon>
        <taxon>Capra</taxon>
    </lineage>
</organism>
<name>NU2M_CAPHI</name>
<gene>
    <name evidence="1" type="primary">MT-ND2</name>
    <name type="synonym">MTND2</name>
    <name type="synonym">NADH2</name>
    <name type="synonym">ND2</name>
</gene>